<protein>
    <recommendedName>
        <fullName evidence="1">NADH-quinone oxidoreductase subunit B</fullName>
        <ecNumber evidence="1">7.1.1.-</ecNumber>
    </recommendedName>
    <alternativeName>
        <fullName evidence="1">NADH dehydrogenase I subunit B</fullName>
    </alternativeName>
    <alternativeName>
        <fullName evidence="1">NDH-1 subunit B</fullName>
    </alternativeName>
</protein>
<dbReference type="EC" id="7.1.1.-" evidence="1"/>
<dbReference type="EMBL" id="CP000903">
    <property type="protein sequence ID" value="ABY46243.1"/>
    <property type="molecule type" value="Genomic_DNA"/>
</dbReference>
<dbReference type="RefSeq" id="WP_002089729.1">
    <property type="nucleotide sequence ID" value="NC_010184.1"/>
</dbReference>
<dbReference type="SMR" id="A9VS97"/>
<dbReference type="GeneID" id="66265145"/>
<dbReference type="KEGG" id="bwe:BcerKBAB4_5097"/>
<dbReference type="eggNOG" id="COG0377">
    <property type="taxonomic scope" value="Bacteria"/>
</dbReference>
<dbReference type="HOGENOM" id="CLU_055737_7_3_9"/>
<dbReference type="Proteomes" id="UP000002154">
    <property type="component" value="Chromosome"/>
</dbReference>
<dbReference type="GO" id="GO:0005886">
    <property type="term" value="C:plasma membrane"/>
    <property type="evidence" value="ECO:0007669"/>
    <property type="project" value="UniProtKB-SubCell"/>
</dbReference>
<dbReference type="GO" id="GO:0045271">
    <property type="term" value="C:respiratory chain complex I"/>
    <property type="evidence" value="ECO:0007669"/>
    <property type="project" value="TreeGrafter"/>
</dbReference>
<dbReference type="GO" id="GO:0051539">
    <property type="term" value="F:4 iron, 4 sulfur cluster binding"/>
    <property type="evidence" value="ECO:0007669"/>
    <property type="project" value="UniProtKB-KW"/>
</dbReference>
<dbReference type="GO" id="GO:0005506">
    <property type="term" value="F:iron ion binding"/>
    <property type="evidence" value="ECO:0007669"/>
    <property type="project" value="UniProtKB-UniRule"/>
</dbReference>
<dbReference type="GO" id="GO:0008137">
    <property type="term" value="F:NADH dehydrogenase (ubiquinone) activity"/>
    <property type="evidence" value="ECO:0007669"/>
    <property type="project" value="InterPro"/>
</dbReference>
<dbReference type="GO" id="GO:0050136">
    <property type="term" value="F:NADH:ubiquinone reductase (non-electrogenic) activity"/>
    <property type="evidence" value="ECO:0007669"/>
    <property type="project" value="UniProtKB-UniRule"/>
</dbReference>
<dbReference type="GO" id="GO:0048038">
    <property type="term" value="F:quinone binding"/>
    <property type="evidence" value="ECO:0007669"/>
    <property type="project" value="UniProtKB-KW"/>
</dbReference>
<dbReference type="GO" id="GO:0009060">
    <property type="term" value="P:aerobic respiration"/>
    <property type="evidence" value="ECO:0007669"/>
    <property type="project" value="TreeGrafter"/>
</dbReference>
<dbReference type="GO" id="GO:0015990">
    <property type="term" value="P:electron transport coupled proton transport"/>
    <property type="evidence" value="ECO:0007669"/>
    <property type="project" value="TreeGrafter"/>
</dbReference>
<dbReference type="FunFam" id="3.40.50.12280:FF:000002">
    <property type="entry name" value="NADH-quinone oxidoreductase subunit B"/>
    <property type="match status" value="1"/>
</dbReference>
<dbReference type="Gene3D" id="3.40.50.12280">
    <property type="match status" value="1"/>
</dbReference>
<dbReference type="HAMAP" id="MF_01356">
    <property type="entry name" value="NDH1_NuoB"/>
    <property type="match status" value="1"/>
</dbReference>
<dbReference type="InterPro" id="IPR006137">
    <property type="entry name" value="NADH_UbQ_OxRdtase-like_20kDa"/>
</dbReference>
<dbReference type="InterPro" id="IPR006138">
    <property type="entry name" value="NADH_UQ_OxRdtase_20Kd_su"/>
</dbReference>
<dbReference type="NCBIfam" id="TIGR01957">
    <property type="entry name" value="nuoB_fam"/>
    <property type="match status" value="1"/>
</dbReference>
<dbReference type="NCBIfam" id="NF005012">
    <property type="entry name" value="PRK06411.1"/>
    <property type="match status" value="1"/>
</dbReference>
<dbReference type="PANTHER" id="PTHR11995">
    <property type="entry name" value="NADH DEHYDROGENASE"/>
    <property type="match status" value="1"/>
</dbReference>
<dbReference type="PANTHER" id="PTHR11995:SF14">
    <property type="entry name" value="NADH DEHYDROGENASE [UBIQUINONE] IRON-SULFUR PROTEIN 7, MITOCHONDRIAL"/>
    <property type="match status" value="1"/>
</dbReference>
<dbReference type="Pfam" id="PF01058">
    <property type="entry name" value="Oxidored_q6"/>
    <property type="match status" value="1"/>
</dbReference>
<dbReference type="SUPFAM" id="SSF56770">
    <property type="entry name" value="HydA/Nqo6-like"/>
    <property type="match status" value="1"/>
</dbReference>
<sequence>MVINFEELHPQERAELERNIFFSTLEQLKGWARSNSLWPMTFGLACCAIEMMGVGSSHYDLDRFGSFFRTSPRQSDVMIVSGTVTKKMAPIVRRLYDQMPEPKWVIAMGSCATAGGPYVNSYAVVKGVDQIVPVDVYIPGCPPNPAALIYGINKLKEKIRYEARTGKQVTNK</sequence>
<proteinExistence type="inferred from homology"/>
<gene>
    <name evidence="1" type="primary">nuoB</name>
    <name type="ordered locus">BcerKBAB4_5097</name>
</gene>
<comment type="function">
    <text evidence="1">NDH-1 shuttles electrons from NADH, via FMN and iron-sulfur (Fe-S) centers, to quinones in the respiratory chain. The immediate electron acceptor for the enzyme in this species is believed to be a menaquinone. Couples the redox reaction to proton translocation (for every two electrons transferred, four hydrogen ions are translocated across the cytoplasmic membrane), and thus conserves the redox energy in a proton gradient.</text>
</comment>
<comment type="catalytic activity">
    <reaction evidence="1">
        <text>a quinone + NADH + 5 H(+)(in) = a quinol + NAD(+) + 4 H(+)(out)</text>
        <dbReference type="Rhea" id="RHEA:57888"/>
        <dbReference type="ChEBI" id="CHEBI:15378"/>
        <dbReference type="ChEBI" id="CHEBI:24646"/>
        <dbReference type="ChEBI" id="CHEBI:57540"/>
        <dbReference type="ChEBI" id="CHEBI:57945"/>
        <dbReference type="ChEBI" id="CHEBI:132124"/>
    </reaction>
</comment>
<comment type="cofactor">
    <cofactor evidence="1">
        <name>[4Fe-4S] cluster</name>
        <dbReference type="ChEBI" id="CHEBI:49883"/>
    </cofactor>
    <text evidence="1">Binds 1 [4Fe-4S] cluster.</text>
</comment>
<comment type="subunit">
    <text evidence="1">NDH-1 is composed of 14 different subunits. Subunits NuoB, C, D, E, F, and G constitute the peripheral sector of the complex.</text>
</comment>
<comment type="subcellular location">
    <subcellularLocation>
        <location evidence="1">Cell membrane</location>
        <topology evidence="1">Peripheral membrane protein</topology>
        <orientation evidence="1">Cytoplasmic side</orientation>
    </subcellularLocation>
</comment>
<comment type="similarity">
    <text evidence="1">Belongs to the complex I 20 kDa subunit family.</text>
</comment>
<feature type="chain" id="PRO_0000376139" description="NADH-quinone oxidoreductase subunit B">
    <location>
        <begin position="1"/>
        <end position="172"/>
    </location>
</feature>
<feature type="binding site" evidence="1">
    <location>
        <position position="46"/>
    </location>
    <ligand>
        <name>[4Fe-4S] cluster</name>
        <dbReference type="ChEBI" id="CHEBI:49883"/>
    </ligand>
</feature>
<feature type="binding site" evidence="1">
    <location>
        <position position="47"/>
    </location>
    <ligand>
        <name>[4Fe-4S] cluster</name>
        <dbReference type="ChEBI" id="CHEBI:49883"/>
    </ligand>
</feature>
<feature type="binding site" evidence="1">
    <location>
        <position position="111"/>
    </location>
    <ligand>
        <name>[4Fe-4S] cluster</name>
        <dbReference type="ChEBI" id="CHEBI:49883"/>
    </ligand>
</feature>
<feature type="binding site" evidence="1">
    <location>
        <position position="141"/>
    </location>
    <ligand>
        <name>[4Fe-4S] cluster</name>
        <dbReference type="ChEBI" id="CHEBI:49883"/>
    </ligand>
</feature>
<reference key="1">
    <citation type="journal article" date="2008" name="Chem. Biol. Interact.">
        <title>Extending the Bacillus cereus group genomics to putative food-borne pathogens of different toxicity.</title>
        <authorList>
            <person name="Lapidus A."/>
            <person name="Goltsman E."/>
            <person name="Auger S."/>
            <person name="Galleron N."/>
            <person name="Segurens B."/>
            <person name="Dossat C."/>
            <person name="Land M.L."/>
            <person name="Broussolle V."/>
            <person name="Brillard J."/>
            <person name="Guinebretiere M.-H."/>
            <person name="Sanchis V."/>
            <person name="Nguen-the C."/>
            <person name="Lereclus D."/>
            <person name="Richardson P."/>
            <person name="Wincker P."/>
            <person name="Weissenbach J."/>
            <person name="Ehrlich S.D."/>
            <person name="Sorokin A."/>
        </authorList>
    </citation>
    <scope>NUCLEOTIDE SEQUENCE [LARGE SCALE GENOMIC DNA]</scope>
    <source>
        <strain>KBAB4</strain>
    </source>
</reference>
<evidence type="ECO:0000255" key="1">
    <source>
        <dbReference type="HAMAP-Rule" id="MF_01356"/>
    </source>
</evidence>
<name>NUOB_BACMK</name>
<accession>A9VS97</accession>
<organism>
    <name type="scientific">Bacillus mycoides (strain KBAB4)</name>
    <name type="common">Bacillus weihenstephanensis</name>
    <dbReference type="NCBI Taxonomy" id="315730"/>
    <lineage>
        <taxon>Bacteria</taxon>
        <taxon>Bacillati</taxon>
        <taxon>Bacillota</taxon>
        <taxon>Bacilli</taxon>
        <taxon>Bacillales</taxon>
        <taxon>Bacillaceae</taxon>
        <taxon>Bacillus</taxon>
        <taxon>Bacillus cereus group</taxon>
    </lineage>
</organism>
<keyword id="KW-0004">4Fe-4S</keyword>
<keyword id="KW-1003">Cell membrane</keyword>
<keyword id="KW-0408">Iron</keyword>
<keyword id="KW-0411">Iron-sulfur</keyword>
<keyword id="KW-0472">Membrane</keyword>
<keyword id="KW-0479">Metal-binding</keyword>
<keyword id="KW-0520">NAD</keyword>
<keyword id="KW-0874">Quinone</keyword>
<keyword id="KW-1278">Translocase</keyword>
<keyword id="KW-0813">Transport</keyword>